<gene>
    <name type="primary">tnpA</name>
</gene>
<reference key="1">
    <citation type="journal article" date="1985" name="EMBO J.">
        <title>Transposon Tn554: complete nucleotide sequence and isolation of transposition-defective and antibiotic-sensitive mutants.</title>
        <authorList>
            <person name="Murphy E."/>
            <person name="Huwyler L."/>
            <person name="Do Carno de Freire Bastos M."/>
        </authorList>
    </citation>
    <scope>NUCLEOTIDE SEQUENCE [GENOMIC DNA]</scope>
</reference>
<comment type="function">
    <text>One of three proteins encoded by transposon Tn554 required for its transposition.</text>
</comment>
<comment type="similarity">
    <text evidence="3">Belongs to the 'phage' integrase family.</text>
</comment>
<sequence>MKVQRIEVENKPYPLYLLLDKEYQLIEPVMKFIKYLDNTGKSPNTIKAYCYHLKLLYEFMEQRGVILNDINFELLADFVGWLRYPSASNVIDLQSKKAIREETTVNTILNVVMSFLDYLSRLGEFKSIDVFKQAKGRNFKGFLHHVNKGRYQKNVLKLRVKKKQIRTLRSKEVKQIIDACHTKRDKLILMLMYEGGLRIGEVLSLRLEDIVTWDNQIHLTPRDVNVNEAYIKLRKERTIHVSKELMSLYTDYLIYEYSEELEHDYVFISLKEGYFGKPLKYQSVLDLVRRIVKRTGIEFTSHMLRHTHATQLIREGWDVAFVQKRLGHAHVQTTLNTYVHLSDQDMKNEFNKYLERKEHKK</sequence>
<evidence type="ECO:0000255" key="1">
    <source>
        <dbReference type="PROSITE-ProRule" id="PRU01246"/>
    </source>
</evidence>
<evidence type="ECO:0000255" key="2">
    <source>
        <dbReference type="PROSITE-ProRule" id="PRU01248"/>
    </source>
</evidence>
<evidence type="ECO:0000305" key="3"/>
<feature type="chain" id="PRO_0000197552" description="Transposase A from transposon Tn554">
    <location>
        <begin position="1"/>
        <end position="361"/>
    </location>
</feature>
<feature type="domain" description="Core-binding (CB)" evidence="2">
    <location>
        <begin position="23"/>
        <end position="120"/>
    </location>
</feature>
<feature type="domain" description="Tyr recombinase" evidence="1">
    <location>
        <begin position="163"/>
        <end position="351"/>
    </location>
</feature>
<feature type="active site" evidence="1">
    <location>
        <position position="198"/>
    </location>
</feature>
<feature type="active site" evidence="1">
    <location>
        <position position="232"/>
    </location>
</feature>
<feature type="active site" evidence="1">
    <location>
        <position position="302"/>
    </location>
</feature>
<feature type="active site" evidence="1">
    <location>
        <position position="305"/>
    </location>
</feature>
<feature type="active site" evidence="1">
    <location>
        <position position="328"/>
    </location>
</feature>
<feature type="active site" description="O-(3'-phospho-DNA)-tyrosine intermediate" evidence="1">
    <location>
        <position position="338"/>
    </location>
</feature>
<proteinExistence type="inferred from homology"/>
<name>TNPA_STAAU</name>
<accession>P0A052</accession>
<accession>P06696</accession>
<dbReference type="EMBL" id="X03216">
    <property type="protein sequence ID" value="CAA26960.1"/>
    <property type="molecule type" value="Genomic_DNA"/>
</dbReference>
<dbReference type="PIR" id="A24584">
    <property type="entry name" value="A24584"/>
</dbReference>
<dbReference type="RefSeq" id="WP_000868132.1">
    <property type="nucleotide sequence ID" value="NZ_WWCF01000004.1"/>
</dbReference>
<dbReference type="SMR" id="P0A052"/>
<dbReference type="OMA" id="TYIHPSD"/>
<dbReference type="OrthoDB" id="9803188at2"/>
<dbReference type="GO" id="GO:0003677">
    <property type="term" value="F:DNA binding"/>
    <property type="evidence" value="ECO:0007669"/>
    <property type="project" value="UniProtKB-KW"/>
</dbReference>
<dbReference type="GO" id="GO:0015074">
    <property type="term" value="P:DNA integration"/>
    <property type="evidence" value="ECO:0007669"/>
    <property type="project" value="UniProtKB-KW"/>
</dbReference>
<dbReference type="GO" id="GO:0006310">
    <property type="term" value="P:DNA recombination"/>
    <property type="evidence" value="ECO:0007669"/>
    <property type="project" value="UniProtKB-KW"/>
</dbReference>
<dbReference type="CDD" id="cd01186">
    <property type="entry name" value="INT_tnpA_C_Tn554"/>
    <property type="match status" value="1"/>
</dbReference>
<dbReference type="Gene3D" id="1.10.150.130">
    <property type="match status" value="1"/>
</dbReference>
<dbReference type="Gene3D" id="1.10.443.10">
    <property type="entry name" value="Intergrase catalytic core"/>
    <property type="match status" value="1"/>
</dbReference>
<dbReference type="InterPro" id="IPR044068">
    <property type="entry name" value="CB"/>
</dbReference>
<dbReference type="InterPro" id="IPR011010">
    <property type="entry name" value="DNA_brk_join_enz"/>
</dbReference>
<dbReference type="InterPro" id="IPR042721">
    <property type="entry name" value="INT_tnpA_C_Tn554"/>
</dbReference>
<dbReference type="InterPro" id="IPR013762">
    <property type="entry name" value="Integrase-like_cat_sf"/>
</dbReference>
<dbReference type="InterPro" id="IPR002104">
    <property type="entry name" value="Integrase_catalytic"/>
</dbReference>
<dbReference type="InterPro" id="IPR010998">
    <property type="entry name" value="Integrase_recombinase_N"/>
</dbReference>
<dbReference type="InterPro" id="IPR004107">
    <property type="entry name" value="Integrase_SAM-like_N"/>
</dbReference>
<dbReference type="InterPro" id="IPR050090">
    <property type="entry name" value="Tyrosine_recombinase_XerCD"/>
</dbReference>
<dbReference type="PANTHER" id="PTHR30349:SF41">
    <property type="entry name" value="INTEGRASE_RECOMBINASE PROTEIN MJ0367-RELATED"/>
    <property type="match status" value="1"/>
</dbReference>
<dbReference type="PANTHER" id="PTHR30349">
    <property type="entry name" value="PHAGE INTEGRASE-RELATED"/>
    <property type="match status" value="1"/>
</dbReference>
<dbReference type="Pfam" id="PF02899">
    <property type="entry name" value="Phage_int_SAM_1"/>
    <property type="match status" value="1"/>
</dbReference>
<dbReference type="Pfam" id="PF00589">
    <property type="entry name" value="Phage_integrase"/>
    <property type="match status" value="1"/>
</dbReference>
<dbReference type="SUPFAM" id="SSF56349">
    <property type="entry name" value="DNA breaking-rejoining enzymes"/>
    <property type="match status" value="1"/>
</dbReference>
<dbReference type="PROSITE" id="PS51900">
    <property type="entry name" value="CB"/>
    <property type="match status" value="1"/>
</dbReference>
<dbReference type="PROSITE" id="PS51898">
    <property type="entry name" value="TYR_RECOMBINASE"/>
    <property type="match status" value="1"/>
</dbReference>
<protein>
    <recommendedName>
        <fullName>Transposase A from transposon Tn554</fullName>
    </recommendedName>
</protein>
<organism>
    <name type="scientific">Staphylococcus aureus</name>
    <dbReference type="NCBI Taxonomy" id="1280"/>
    <lineage>
        <taxon>Bacteria</taxon>
        <taxon>Bacillati</taxon>
        <taxon>Bacillota</taxon>
        <taxon>Bacilli</taxon>
        <taxon>Bacillales</taxon>
        <taxon>Staphylococcaceae</taxon>
        <taxon>Staphylococcus</taxon>
    </lineage>
</organism>
<keyword id="KW-0229">DNA integration</keyword>
<keyword id="KW-0233">DNA recombination</keyword>
<keyword id="KW-0238">DNA-binding</keyword>
<keyword id="KW-0814">Transposable element</keyword>